<feature type="chain" id="PRO_1000049513" description="Glycerol-3-phosphate dehydrogenase [NAD(P)+]">
    <location>
        <begin position="1"/>
        <end position="336"/>
    </location>
</feature>
<feature type="active site" description="Proton acceptor" evidence="1">
    <location>
        <position position="192"/>
    </location>
</feature>
<feature type="binding site" evidence="1">
    <location>
        <position position="16"/>
    </location>
    <ligand>
        <name>NADPH</name>
        <dbReference type="ChEBI" id="CHEBI:57783"/>
    </ligand>
</feature>
<feature type="binding site" evidence="1">
    <location>
        <position position="109"/>
    </location>
    <ligand>
        <name>NADPH</name>
        <dbReference type="ChEBI" id="CHEBI:57783"/>
    </ligand>
</feature>
<feature type="binding site" evidence="1">
    <location>
        <position position="109"/>
    </location>
    <ligand>
        <name>sn-glycerol 3-phosphate</name>
        <dbReference type="ChEBI" id="CHEBI:57597"/>
    </ligand>
</feature>
<feature type="binding site" evidence="1">
    <location>
        <position position="137"/>
    </location>
    <ligand>
        <name>sn-glycerol 3-phosphate</name>
        <dbReference type="ChEBI" id="CHEBI:57597"/>
    </ligand>
</feature>
<feature type="binding site" evidence="1">
    <location>
        <position position="139"/>
    </location>
    <ligand>
        <name>sn-glycerol 3-phosphate</name>
        <dbReference type="ChEBI" id="CHEBI:57597"/>
    </ligand>
</feature>
<feature type="binding site" evidence="1">
    <location>
        <position position="141"/>
    </location>
    <ligand>
        <name>NADPH</name>
        <dbReference type="ChEBI" id="CHEBI:57783"/>
    </ligand>
</feature>
<feature type="binding site" evidence="1">
    <location>
        <position position="192"/>
    </location>
    <ligand>
        <name>sn-glycerol 3-phosphate</name>
        <dbReference type="ChEBI" id="CHEBI:57597"/>
    </ligand>
</feature>
<feature type="binding site" evidence="1">
    <location>
        <position position="245"/>
    </location>
    <ligand>
        <name>sn-glycerol 3-phosphate</name>
        <dbReference type="ChEBI" id="CHEBI:57597"/>
    </ligand>
</feature>
<feature type="binding site" evidence="1">
    <location>
        <position position="255"/>
    </location>
    <ligand>
        <name>sn-glycerol 3-phosphate</name>
        <dbReference type="ChEBI" id="CHEBI:57597"/>
    </ligand>
</feature>
<feature type="binding site" evidence="1">
    <location>
        <position position="256"/>
    </location>
    <ligand>
        <name>NADPH</name>
        <dbReference type="ChEBI" id="CHEBI:57783"/>
    </ligand>
</feature>
<feature type="binding site" evidence="1">
    <location>
        <position position="256"/>
    </location>
    <ligand>
        <name>sn-glycerol 3-phosphate</name>
        <dbReference type="ChEBI" id="CHEBI:57597"/>
    </ligand>
</feature>
<feature type="binding site" evidence="1">
    <location>
        <position position="257"/>
    </location>
    <ligand>
        <name>sn-glycerol 3-phosphate</name>
        <dbReference type="ChEBI" id="CHEBI:57597"/>
    </ligand>
</feature>
<feature type="binding site" evidence="1">
    <location>
        <position position="280"/>
    </location>
    <ligand>
        <name>NADPH</name>
        <dbReference type="ChEBI" id="CHEBI:57783"/>
    </ligand>
</feature>
<feature type="binding site" evidence="1">
    <location>
        <position position="282"/>
    </location>
    <ligand>
        <name>NADPH</name>
        <dbReference type="ChEBI" id="CHEBI:57783"/>
    </ligand>
</feature>
<evidence type="ECO:0000255" key="1">
    <source>
        <dbReference type="HAMAP-Rule" id="MF_00394"/>
    </source>
</evidence>
<protein>
    <recommendedName>
        <fullName evidence="1">Glycerol-3-phosphate dehydrogenase [NAD(P)+]</fullName>
        <ecNumber evidence="1">1.1.1.94</ecNumber>
    </recommendedName>
    <alternativeName>
        <fullName evidence="1">NAD(P)(+)-dependent glycerol-3-phosphate dehydrogenase</fullName>
    </alternativeName>
    <alternativeName>
        <fullName evidence="1">NAD(P)H-dependent dihydroxyacetone-phosphate reductase</fullName>
    </alternativeName>
</protein>
<comment type="function">
    <text evidence="1">Catalyzes the reduction of the glycolytic intermediate dihydroxyacetone phosphate (DHAP) to sn-glycerol 3-phosphate (G3P), the key precursor for phospholipid synthesis.</text>
</comment>
<comment type="catalytic activity">
    <reaction evidence="1">
        <text>sn-glycerol 3-phosphate + NAD(+) = dihydroxyacetone phosphate + NADH + H(+)</text>
        <dbReference type="Rhea" id="RHEA:11092"/>
        <dbReference type="ChEBI" id="CHEBI:15378"/>
        <dbReference type="ChEBI" id="CHEBI:57540"/>
        <dbReference type="ChEBI" id="CHEBI:57597"/>
        <dbReference type="ChEBI" id="CHEBI:57642"/>
        <dbReference type="ChEBI" id="CHEBI:57945"/>
        <dbReference type="EC" id="1.1.1.94"/>
    </reaction>
    <physiologicalReaction direction="right-to-left" evidence="1">
        <dbReference type="Rhea" id="RHEA:11094"/>
    </physiologicalReaction>
</comment>
<comment type="catalytic activity">
    <reaction evidence="1">
        <text>sn-glycerol 3-phosphate + NADP(+) = dihydroxyacetone phosphate + NADPH + H(+)</text>
        <dbReference type="Rhea" id="RHEA:11096"/>
        <dbReference type="ChEBI" id="CHEBI:15378"/>
        <dbReference type="ChEBI" id="CHEBI:57597"/>
        <dbReference type="ChEBI" id="CHEBI:57642"/>
        <dbReference type="ChEBI" id="CHEBI:57783"/>
        <dbReference type="ChEBI" id="CHEBI:58349"/>
        <dbReference type="EC" id="1.1.1.94"/>
    </reaction>
    <physiologicalReaction direction="right-to-left" evidence="1">
        <dbReference type="Rhea" id="RHEA:11098"/>
    </physiologicalReaction>
</comment>
<comment type="pathway">
    <text evidence="1">Membrane lipid metabolism; glycerophospholipid metabolism.</text>
</comment>
<comment type="subcellular location">
    <subcellularLocation>
        <location evidence="1">Cytoplasm</location>
    </subcellularLocation>
</comment>
<comment type="similarity">
    <text evidence="1">Belongs to the NAD-dependent glycerol-3-phosphate dehydrogenase family.</text>
</comment>
<accession>Q0C3I7</accession>
<name>GPDA_HYPNA</name>
<dbReference type="EC" id="1.1.1.94" evidence="1"/>
<dbReference type="EMBL" id="CP000158">
    <property type="protein sequence ID" value="ABI76859.1"/>
    <property type="molecule type" value="Genomic_DNA"/>
</dbReference>
<dbReference type="RefSeq" id="WP_011646006.1">
    <property type="nucleotide sequence ID" value="NC_008358.1"/>
</dbReference>
<dbReference type="SMR" id="Q0C3I7"/>
<dbReference type="STRING" id="228405.HNE_0982"/>
<dbReference type="KEGG" id="hne:HNE_0982"/>
<dbReference type="eggNOG" id="COG0240">
    <property type="taxonomic scope" value="Bacteria"/>
</dbReference>
<dbReference type="HOGENOM" id="CLU_033449_0_2_5"/>
<dbReference type="UniPathway" id="UPA00940"/>
<dbReference type="Proteomes" id="UP000001959">
    <property type="component" value="Chromosome"/>
</dbReference>
<dbReference type="GO" id="GO:0005829">
    <property type="term" value="C:cytosol"/>
    <property type="evidence" value="ECO:0007669"/>
    <property type="project" value="TreeGrafter"/>
</dbReference>
<dbReference type="GO" id="GO:0047952">
    <property type="term" value="F:glycerol-3-phosphate dehydrogenase [NAD(P)+] activity"/>
    <property type="evidence" value="ECO:0007669"/>
    <property type="project" value="UniProtKB-UniRule"/>
</dbReference>
<dbReference type="GO" id="GO:0051287">
    <property type="term" value="F:NAD binding"/>
    <property type="evidence" value="ECO:0007669"/>
    <property type="project" value="InterPro"/>
</dbReference>
<dbReference type="GO" id="GO:0005975">
    <property type="term" value="P:carbohydrate metabolic process"/>
    <property type="evidence" value="ECO:0007669"/>
    <property type="project" value="InterPro"/>
</dbReference>
<dbReference type="GO" id="GO:0046167">
    <property type="term" value="P:glycerol-3-phosphate biosynthetic process"/>
    <property type="evidence" value="ECO:0007669"/>
    <property type="project" value="UniProtKB-UniRule"/>
</dbReference>
<dbReference type="GO" id="GO:0046168">
    <property type="term" value="P:glycerol-3-phosphate catabolic process"/>
    <property type="evidence" value="ECO:0007669"/>
    <property type="project" value="InterPro"/>
</dbReference>
<dbReference type="GO" id="GO:0006650">
    <property type="term" value="P:glycerophospholipid metabolic process"/>
    <property type="evidence" value="ECO:0007669"/>
    <property type="project" value="UniProtKB-UniRule"/>
</dbReference>
<dbReference type="GO" id="GO:0008654">
    <property type="term" value="P:phospholipid biosynthetic process"/>
    <property type="evidence" value="ECO:0007669"/>
    <property type="project" value="UniProtKB-KW"/>
</dbReference>
<dbReference type="FunFam" id="1.10.1040.10:FF:000001">
    <property type="entry name" value="Glycerol-3-phosphate dehydrogenase [NAD(P)+]"/>
    <property type="match status" value="1"/>
</dbReference>
<dbReference type="FunFam" id="3.40.50.720:FF:000019">
    <property type="entry name" value="Glycerol-3-phosphate dehydrogenase [NAD(P)+]"/>
    <property type="match status" value="1"/>
</dbReference>
<dbReference type="Gene3D" id="1.10.1040.10">
    <property type="entry name" value="N-(1-d-carboxylethyl)-l-norvaline Dehydrogenase, domain 2"/>
    <property type="match status" value="1"/>
</dbReference>
<dbReference type="Gene3D" id="3.40.50.720">
    <property type="entry name" value="NAD(P)-binding Rossmann-like Domain"/>
    <property type="match status" value="1"/>
</dbReference>
<dbReference type="HAMAP" id="MF_00394">
    <property type="entry name" value="NAD_Glyc3P_dehydrog"/>
    <property type="match status" value="1"/>
</dbReference>
<dbReference type="InterPro" id="IPR008927">
    <property type="entry name" value="6-PGluconate_DH-like_C_sf"/>
</dbReference>
<dbReference type="InterPro" id="IPR013328">
    <property type="entry name" value="6PGD_dom2"/>
</dbReference>
<dbReference type="InterPro" id="IPR006168">
    <property type="entry name" value="G3P_DH_NAD-dep"/>
</dbReference>
<dbReference type="InterPro" id="IPR006109">
    <property type="entry name" value="G3P_DH_NAD-dep_C"/>
</dbReference>
<dbReference type="InterPro" id="IPR011128">
    <property type="entry name" value="G3P_DH_NAD-dep_N"/>
</dbReference>
<dbReference type="InterPro" id="IPR036291">
    <property type="entry name" value="NAD(P)-bd_dom_sf"/>
</dbReference>
<dbReference type="NCBIfam" id="NF000940">
    <property type="entry name" value="PRK00094.1-2"/>
    <property type="match status" value="1"/>
</dbReference>
<dbReference type="NCBIfam" id="NF000942">
    <property type="entry name" value="PRK00094.1-4"/>
    <property type="match status" value="1"/>
</dbReference>
<dbReference type="PANTHER" id="PTHR11728">
    <property type="entry name" value="GLYCEROL-3-PHOSPHATE DEHYDROGENASE"/>
    <property type="match status" value="1"/>
</dbReference>
<dbReference type="PANTHER" id="PTHR11728:SF1">
    <property type="entry name" value="GLYCEROL-3-PHOSPHATE DEHYDROGENASE [NAD(+)] 2, CHLOROPLASTIC"/>
    <property type="match status" value="1"/>
</dbReference>
<dbReference type="Pfam" id="PF07479">
    <property type="entry name" value="NAD_Gly3P_dh_C"/>
    <property type="match status" value="1"/>
</dbReference>
<dbReference type="Pfam" id="PF01210">
    <property type="entry name" value="NAD_Gly3P_dh_N"/>
    <property type="match status" value="1"/>
</dbReference>
<dbReference type="PIRSF" id="PIRSF000114">
    <property type="entry name" value="Glycerol-3-P_dh"/>
    <property type="match status" value="1"/>
</dbReference>
<dbReference type="PRINTS" id="PR00077">
    <property type="entry name" value="GPDHDRGNASE"/>
</dbReference>
<dbReference type="SUPFAM" id="SSF48179">
    <property type="entry name" value="6-phosphogluconate dehydrogenase C-terminal domain-like"/>
    <property type="match status" value="1"/>
</dbReference>
<dbReference type="SUPFAM" id="SSF51735">
    <property type="entry name" value="NAD(P)-binding Rossmann-fold domains"/>
    <property type="match status" value="1"/>
</dbReference>
<dbReference type="PROSITE" id="PS00957">
    <property type="entry name" value="NAD_G3PDH"/>
    <property type="match status" value="1"/>
</dbReference>
<keyword id="KW-0963">Cytoplasm</keyword>
<keyword id="KW-0444">Lipid biosynthesis</keyword>
<keyword id="KW-0443">Lipid metabolism</keyword>
<keyword id="KW-0520">NAD</keyword>
<keyword id="KW-0521">NADP</keyword>
<keyword id="KW-0547">Nucleotide-binding</keyword>
<keyword id="KW-0560">Oxidoreductase</keyword>
<keyword id="KW-0594">Phospholipid biosynthesis</keyword>
<keyword id="KW-1208">Phospholipid metabolism</keyword>
<keyword id="KW-1185">Reference proteome</keyword>
<gene>
    <name evidence="1" type="primary">gpsA</name>
    <name type="ordered locus">HNE_0982</name>
</gene>
<reference key="1">
    <citation type="journal article" date="2006" name="J. Bacteriol.">
        <title>Comparative genomic evidence for a close relationship between the dimorphic prosthecate bacteria Hyphomonas neptunium and Caulobacter crescentus.</title>
        <authorList>
            <person name="Badger J.H."/>
            <person name="Hoover T.R."/>
            <person name="Brun Y.V."/>
            <person name="Weiner R.M."/>
            <person name="Laub M.T."/>
            <person name="Alexandre G."/>
            <person name="Mrazek J."/>
            <person name="Ren Q."/>
            <person name="Paulsen I.T."/>
            <person name="Nelson K.E."/>
            <person name="Khouri H.M."/>
            <person name="Radune D."/>
            <person name="Sosa J."/>
            <person name="Dodson R.J."/>
            <person name="Sullivan S.A."/>
            <person name="Rosovitz M.J."/>
            <person name="Madupu R."/>
            <person name="Brinkac L.M."/>
            <person name="Durkin A.S."/>
            <person name="Daugherty S.C."/>
            <person name="Kothari S.P."/>
            <person name="Giglio M.G."/>
            <person name="Zhou L."/>
            <person name="Haft D.H."/>
            <person name="Selengut J.D."/>
            <person name="Davidsen T.M."/>
            <person name="Yang Q."/>
            <person name="Zafar N."/>
            <person name="Ward N.L."/>
        </authorList>
    </citation>
    <scope>NUCLEOTIDE SEQUENCE [LARGE SCALE GENOMIC DNA]</scope>
    <source>
        <strain>ATCC 15444</strain>
    </source>
</reference>
<organism>
    <name type="scientific">Hyphomonas neptunium (strain ATCC 15444)</name>
    <dbReference type="NCBI Taxonomy" id="228405"/>
    <lineage>
        <taxon>Bacteria</taxon>
        <taxon>Pseudomonadati</taxon>
        <taxon>Pseudomonadota</taxon>
        <taxon>Alphaproteobacteria</taxon>
        <taxon>Hyphomonadales</taxon>
        <taxon>Hyphomonadaceae</taxon>
        <taxon>Hyphomonas</taxon>
    </lineage>
</organism>
<proteinExistence type="inferred from homology"/>
<sequence length="336" mass="34803">MTQHFKTFGVIGAGAWGTAIAQMLAREGQTVHLWALEPEVAAAINTARENTAFLKGVPLKPEIRATNKLEDLGLADAIFAVAPAQHTRTTLRALRASLRPGTPVVLCSKGIELATGEFMTQVLKDELPEAIPAVMSGPSFAIDVAKGLPTAVTLAIEDTRLGTELIQAISTPTFRPYLGTDLLGAEVGGSVKNVLAIACGIALGKGLGRSAHAALIARGYAEMTRLALTLGAEAETLTGLSGLGDLVLTCSSETSRNMSLGLALGKGETLASILAARNAVTEGVATAPVLRRLARSQGIEMPICEAVAAVIEGEITVDDAITALLMRPVKAEAVKP</sequence>